<organism>
    <name type="scientific">Burkholderia pseudomallei (strain 668)</name>
    <dbReference type="NCBI Taxonomy" id="320373"/>
    <lineage>
        <taxon>Bacteria</taxon>
        <taxon>Pseudomonadati</taxon>
        <taxon>Pseudomonadota</taxon>
        <taxon>Betaproteobacteria</taxon>
        <taxon>Burkholderiales</taxon>
        <taxon>Burkholderiaceae</taxon>
        <taxon>Burkholderia</taxon>
        <taxon>pseudomallei group</taxon>
    </lineage>
</organism>
<keyword id="KW-1003">Cell membrane</keyword>
<keyword id="KW-0472">Membrane</keyword>
<keyword id="KW-0812">Transmembrane</keyword>
<keyword id="KW-1133">Transmembrane helix</keyword>
<keyword id="KW-0843">Virulence</keyword>
<dbReference type="EMBL" id="CP000571">
    <property type="protein sequence ID" value="ABN86463.1"/>
    <property type="molecule type" value="Genomic_DNA"/>
</dbReference>
<dbReference type="RefSeq" id="WP_011853457.1">
    <property type="nucleotide sequence ID" value="NC_009075.1"/>
</dbReference>
<dbReference type="SMR" id="A3NLD7"/>
<dbReference type="MEROPS" id="N06.002"/>
<dbReference type="KEGG" id="bpd:BURPS668_A2164"/>
<dbReference type="HOGENOM" id="CLU_041013_1_3_4"/>
<dbReference type="GO" id="GO:0005886">
    <property type="term" value="C:plasma membrane"/>
    <property type="evidence" value="ECO:0007669"/>
    <property type="project" value="UniProtKB-SubCell"/>
</dbReference>
<dbReference type="GO" id="GO:0009306">
    <property type="term" value="P:protein secretion"/>
    <property type="evidence" value="ECO:0007669"/>
    <property type="project" value="InterPro"/>
</dbReference>
<dbReference type="Gene3D" id="6.10.250.2080">
    <property type="match status" value="1"/>
</dbReference>
<dbReference type="Gene3D" id="3.40.1690.10">
    <property type="entry name" value="secretion proteins EscU"/>
    <property type="match status" value="1"/>
</dbReference>
<dbReference type="InterPro" id="IPR006307">
    <property type="entry name" value="BsaZ-like"/>
</dbReference>
<dbReference type="InterPro" id="IPR006135">
    <property type="entry name" value="T3SS_substrate_exporter"/>
</dbReference>
<dbReference type="InterPro" id="IPR029025">
    <property type="entry name" value="T3SS_substrate_exporter_C"/>
</dbReference>
<dbReference type="NCBIfam" id="TIGR01404">
    <property type="entry name" value="FlhB_rel_III"/>
    <property type="match status" value="1"/>
</dbReference>
<dbReference type="NCBIfam" id="NF006017">
    <property type="entry name" value="PRK08156.1"/>
    <property type="match status" value="1"/>
</dbReference>
<dbReference type="PANTHER" id="PTHR30531">
    <property type="entry name" value="FLAGELLAR BIOSYNTHETIC PROTEIN FLHB"/>
    <property type="match status" value="1"/>
</dbReference>
<dbReference type="PANTHER" id="PTHR30531:SF14">
    <property type="entry name" value="SURFACE PRESENTATION OF ANTIGENS PROTEIN SPAS"/>
    <property type="match status" value="1"/>
</dbReference>
<dbReference type="Pfam" id="PF01312">
    <property type="entry name" value="Bac_export_2"/>
    <property type="match status" value="1"/>
</dbReference>
<dbReference type="PRINTS" id="PR00950">
    <property type="entry name" value="TYPE3IMSPROT"/>
</dbReference>
<dbReference type="SUPFAM" id="SSF160544">
    <property type="entry name" value="EscU C-terminal domain-like"/>
    <property type="match status" value="1"/>
</dbReference>
<feature type="chain" id="PRO_0000344017" description="Secretion apparatus protein BsaZ">
    <location>
        <begin position="1"/>
        <end position="406"/>
    </location>
</feature>
<feature type="transmembrane region" description="Helical" evidence="2">
    <location>
        <begin position="28"/>
        <end position="48"/>
    </location>
</feature>
<feature type="transmembrane region" description="Helical" evidence="2">
    <location>
        <begin position="80"/>
        <end position="100"/>
    </location>
</feature>
<feature type="transmembrane region" description="Helical" evidence="2">
    <location>
        <begin position="137"/>
        <end position="157"/>
    </location>
</feature>
<feature type="transmembrane region" description="Helical" evidence="2">
    <location>
        <begin position="175"/>
        <end position="195"/>
    </location>
</feature>
<feature type="region of interest" description="Disordered" evidence="3">
    <location>
        <begin position="341"/>
        <end position="406"/>
    </location>
</feature>
<feature type="compositionally biased region" description="Low complexity" evidence="3">
    <location>
        <begin position="370"/>
        <end position="399"/>
    </location>
</feature>
<sequence length="406" mass="43963">MAEKTEKPTAKKLRDAAKKGQTFKARDIVALIVIATGALAAPALVDLTRIAAEFVRIASTGAQPNPGAYAFAWAKLFLRIAAPFVLLCAAAGALPSLVQSRFTLAVESIRFDLTALDPVKGMKRLFSWRSAKDAVKALLYVGVFALTVRVFAGLYHADVFGLFRARPALLGHMWIVLTVRLVLLFLLCALPVLILDAAVEYFLYHRELKMDKHEVKQEYKESEGNHEIKSKRREIHQELLSEEIKANVEQSDFIVANPTHIAIGVYVNPDIVPIPFVSVRETNARALAVIRHAEACGVPVVRNVALARSIYRNSPRRYSFVSHDDIDGVMRVLIWLGEVEAANRGGPPPETRAPTSAEPQARDGVAPPGDACADNAFPDDAPPGAAAPNAGSPDGGAPARTGDQNA</sequence>
<reference key="1">
    <citation type="journal article" date="2010" name="Genome Biol. Evol.">
        <title>Continuing evolution of Burkholderia mallei through genome reduction and large-scale rearrangements.</title>
        <authorList>
            <person name="Losada L."/>
            <person name="Ronning C.M."/>
            <person name="DeShazer D."/>
            <person name="Woods D."/>
            <person name="Fedorova N."/>
            <person name="Kim H.S."/>
            <person name="Shabalina S.A."/>
            <person name="Pearson T.R."/>
            <person name="Brinkac L."/>
            <person name="Tan P."/>
            <person name="Nandi T."/>
            <person name="Crabtree J."/>
            <person name="Badger J."/>
            <person name="Beckstrom-Sternberg S."/>
            <person name="Saqib M."/>
            <person name="Schutzer S.E."/>
            <person name="Keim P."/>
            <person name="Nierman W.C."/>
        </authorList>
    </citation>
    <scope>NUCLEOTIDE SEQUENCE [LARGE SCALE GENOMIC DNA]</scope>
    <source>
        <strain>668</strain>
    </source>
</reference>
<evidence type="ECO:0000250" key="1"/>
<evidence type="ECO:0000255" key="2"/>
<evidence type="ECO:0000256" key="3">
    <source>
        <dbReference type="SAM" id="MobiDB-lite"/>
    </source>
</evidence>
<evidence type="ECO:0000305" key="4"/>
<comment type="function">
    <text evidence="1">Part of the bsa type III secretion system, is involved in the intracellular replication of invading bacteria inside the host cell. Probably necessary for the lysis of the vacuole membrane and escape into the host cell cytoplasm (By similarity).</text>
</comment>
<comment type="subcellular location">
    <subcellularLocation>
        <location evidence="4">Cell membrane</location>
        <topology evidence="4">Multi-pass membrane protein</topology>
    </subcellularLocation>
</comment>
<comment type="similarity">
    <text evidence="4">Belongs to the type III secretion exporter family.</text>
</comment>
<protein>
    <recommendedName>
        <fullName>Secretion apparatus protein BsaZ</fullName>
    </recommendedName>
</protein>
<gene>
    <name type="primary">bsaZ</name>
    <name type="ordered locus">BURPS668_A2164</name>
</gene>
<name>BSAZ_BURP6</name>
<accession>A3NLD7</accession>
<proteinExistence type="inferred from homology"/>